<protein>
    <recommendedName>
        <fullName evidence="2">Protein cereblon</fullName>
    </recommendedName>
    <alternativeName>
        <fullName evidence="2">Protein ohgata</fullName>
    </alternativeName>
</protein>
<gene>
    <name evidence="2" type="primary">ohgt</name>
    <name evidence="2" type="synonym">crbn</name>
    <name type="ORF">GD18661</name>
</gene>
<name>CRBN_DROSI</name>
<sequence>MDEEENSEINSVQARNEDVQLEDQSQSQGLQDRQVDAIEQAWNDAMPDEPSPPAEYAFHDPLAIVGEGGDAPEAMVEDVLQDDTASEGSHPSSDMSLESPGSEDDSDVQGLPNWMIPQNRLRSAVDMMVSQARNRDGGIAALLSGDNFLQRVRSMVFSQERRRSRTSEETSQEEAAEEPDDPPPQQPPLPPIDIGFDTNLPAEHSYFGNHLSRVPGVDYLEVGSVHHMLIFLHHHILFPGEVLPFMIDGQMFDDDMPGLDGLIFGVSFPRLQPPEDNPHKLYGVTCQIYERGESGRGLVFYKSRALQRIVINCDDIKGSPQYIARNPTNKCFSNVKILPEYFLPEPLQSVDMGSMARFRDIPSMRDKYRRFQLSTTTWPSDACQEYSFGSIVERARQRLESQKIDTMPKCPIQLSFWLVRNLHLTEKMMRLTFLTDSVNTRLQLIKSTFKDETLFFCRYCNSSLALCSDLFAMSKHGVQTQYCNPEGYIHETNTVYRVISHAIGYSGEPSTKFSWFPGYQWHIILCKFCAQHVGWEFKAVLPNLTPNVFFGLSGSSVRIGKASEYSPFNGTTYVVRNMLRMISSDME</sequence>
<feature type="chain" id="PRO_0000393886" description="Protein cereblon">
    <location>
        <begin position="1"/>
        <end position="587"/>
    </location>
</feature>
<feature type="domain" description="Lon N-terminal" evidence="3">
    <location>
        <begin position="227"/>
        <end position="453"/>
    </location>
</feature>
<feature type="domain" description="CULT" evidence="4">
    <location>
        <begin position="452"/>
        <end position="561"/>
    </location>
</feature>
<feature type="region of interest" description="Disordered" evidence="5">
    <location>
        <begin position="1"/>
        <end position="56"/>
    </location>
</feature>
<feature type="region of interest" description="Disordered" evidence="5">
    <location>
        <begin position="78"/>
        <end position="113"/>
    </location>
</feature>
<feature type="region of interest" description="Disordered" evidence="5">
    <location>
        <begin position="157"/>
        <end position="195"/>
    </location>
</feature>
<feature type="compositionally biased region" description="Polar residues" evidence="5">
    <location>
        <begin position="22"/>
        <end position="31"/>
    </location>
</feature>
<feature type="compositionally biased region" description="Polar residues" evidence="5">
    <location>
        <begin position="86"/>
        <end position="96"/>
    </location>
</feature>
<feature type="compositionally biased region" description="Basic and acidic residues" evidence="5">
    <location>
        <begin position="159"/>
        <end position="168"/>
    </location>
</feature>
<feature type="compositionally biased region" description="Acidic residues" evidence="5">
    <location>
        <begin position="170"/>
        <end position="181"/>
    </location>
</feature>
<feature type="compositionally biased region" description="Pro residues" evidence="5">
    <location>
        <begin position="182"/>
        <end position="191"/>
    </location>
</feature>
<feature type="binding site" evidence="4">
    <location>
        <position position="457"/>
    </location>
    <ligand>
        <name>Zn(2+)</name>
        <dbReference type="ChEBI" id="CHEBI:29105"/>
    </ligand>
</feature>
<feature type="binding site" evidence="4">
    <location>
        <position position="460"/>
    </location>
    <ligand>
        <name>Zn(2+)</name>
        <dbReference type="ChEBI" id="CHEBI:29105"/>
    </ligand>
</feature>
<feature type="binding site" evidence="4">
    <location>
        <position position="526"/>
    </location>
    <ligand>
        <name>Zn(2+)</name>
        <dbReference type="ChEBI" id="CHEBI:29105"/>
    </ligand>
</feature>
<feature type="binding site" evidence="4">
    <location>
        <position position="529"/>
    </location>
    <ligand>
        <name>Zn(2+)</name>
        <dbReference type="ChEBI" id="CHEBI:29105"/>
    </ligand>
</feature>
<proteinExistence type="inferred from homology"/>
<reference key="1">
    <citation type="journal article" date="2007" name="Nature">
        <title>Evolution of genes and genomes on the Drosophila phylogeny.</title>
        <authorList>
            <consortium name="Drosophila 12 genomes consortium"/>
        </authorList>
    </citation>
    <scope>NUCLEOTIDE SEQUENCE [LARGE SCALE GENOMIC DNA]</scope>
</reference>
<comment type="function">
    <text evidence="2">Substrate recognition component of a DCX (DDB1-CUL4-X-box) E3 protein ligase complex that mediates the ubiquitination and subsequent proteasomal degradation of target proteins. Has an essential role in mediating growth by negatively regulating insulin signaling. It also has a role in maintaining presynaptic function in the neuromuscular junction synapses of third-instar larvae.</text>
</comment>
<comment type="pathway">
    <text evidence="1">Protein modification; protein ubiquitination.</text>
</comment>
<comment type="subunit">
    <text evidence="1 2">Likely a component of a DCX (DDB1-CUL4-X-box) protein ligase complex (By similarity). May interact with pic/DDB1 (By similarity).</text>
</comment>
<comment type="subcellular location">
    <subcellularLocation>
        <location evidence="2">Nucleus</location>
    </subcellularLocation>
</comment>
<comment type="PTM">
    <text evidence="2">Ubiquitinated.</text>
</comment>
<comment type="similarity">
    <text evidence="6">Belongs to the CRBN family.</text>
</comment>
<organism>
    <name type="scientific">Drosophila simulans</name>
    <name type="common">Fruit fly</name>
    <dbReference type="NCBI Taxonomy" id="7240"/>
    <lineage>
        <taxon>Eukaryota</taxon>
        <taxon>Metazoa</taxon>
        <taxon>Ecdysozoa</taxon>
        <taxon>Arthropoda</taxon>
        <taxon>Hexapoda</taxon>
        <taxon>Insecta</taxon>
        <taxon>Pterygota</taxon>
        <taxon>Neoptera</taxon>
        <taxon>Endopterygota</taxon>
        <taxon>Diptera</taxon>
        <taxon>Brachycera</taxon>
        <taxon>Muscomorpha</taxon>
        <taxon>Ephydroidea</taxon>
        <taxon>Drosophilidae</taxon>
        <taxon>Drosophila</taxon>
        <taxon>Sophophora</taxon>
    </lineage>
</organism>
<dbReference type="EMBL" id="CM000364">
    <property type="protein sequence ID" value="EDX13533.1"/>
    <property type="molecule type" value="Genomic_DNA"/>
</dbReference>
<dbReference type="SMR" id="B4QVV3"/>
<dbReference type="STRING" id="7240.B4QVV3"/>
<dbReference type="EnsemblMetazoa" id="FBtr0218571">
    <property type="protein sequence ID" value="FBpp0217063"/>
    <property type="gene ID" value="FBgn0190182"/>
</dbReference>
<dbReference type="EnsemblMetazoa" id="XM_002103994.4">
    <property type="protein sequence ID" value="XP_002104030.1"/>
    <property type="gene ID" value="LOC6728694"/>
</dbReference>
<dbReference type="GeneID" id="6728694"/>
<dbReference type="KEGG" id="dsi:Dsimw501_GD18661"/>
<dbReference type="CTD" id="41230"/>
<dbReference type="HOGENOM" id="CLU_028769_0_0_1"/>
<dbReference type="OMA" id="SPQYIAR"/>
<dbReference type="OrthoDB" id="267517at2759"/>
<dbReference type="PhylomeDB" id="B4QVV3"/>
<dbReference type="UniPathway" id="UPA00143"/>
<dbReference type="Proteomes" id="UP000000304">
    <property type="component" value="Chromosome 3R"/>
</dbReference>
<dbReference type="Bgee" id="FBgn0190182">
    <property type="expression patterns" value="Expressed in embryo and 3 other cell types or tissues"/>
</dbReference>
<dbReference type="GO" id="GO:0005634">
    <property type="term" value="C:nucleus"/>
    <property type="evidence" value="ECO:0007669"/>
    <property type="project" value="UniProtKB-SubCell"/>
</dbReference>
<dbReference type="GO" id="GO:0046872">
    <property type="term" value="F:metal ion binding"/>
    <property type="evidence" value="ECO:0007669"/>
    <property type="project" value="UniProtKB-KW"/>
</dbReference>
<dbReference type="GO" id="GO:1900075">
    <property type="term" value="P:positive regulation of neuromuscular synaptic transmission"/>
    <property type="evidence" value="ECO:0007669"/>
    <property type="project" value="EnsemblMetazoa"/>
</dbReference>
<dbReference type="GO" id="GO:0030177">
    <property type="term" value="P:positive regulation of Wnt signaling pathway"/>
    <property type="evidence" value="ECO:0007669"/>
    <property type="project" value="EnsemblMetazoa"/>
</dbReference>
<dbReference type="GO" id="GO:0016567">
    <property type="term" value="P:protein ubiquitination"/>
    <property type="evidence" value="ECO:0007669"/>
    <property type="project" value="UniProtKB-UniPathway"/>
</dbReference>
<dbReference type="CDD" id="cd15777">
    <property type="entry name" value="CRBN_C_like"/>
    <property type="match status" value="1"/>
</dbReference>
<dbReference type="FunFam" id="2.170.150.20:FF:000005">
    <property type="entry name" value="Blast:Protein cereblon homolog"/>
    <property type="match status" value="1"/>
</dbReference>
<dbReference type="Gene3D" id="1.20.58.1480">
    <property type="match status" value="1"/>
</dbReference>
<dbReference type="Gene3D" id="2.170.150.20">
    <property type="entry name" value="Peptide methionine sulfoxide reductase"/>
    <property type="match status" value="1"/>
</dbReference>
<dbReference type="InterPro" id="IPR034750">
    <property type="entry name" value="CULT"/>
</dbReference>
<dbReference type="InterPro" id="IPR003111">
    <property type="entry name" value="Lon_prtase_N"/>
</dbReference>
<dbReference type="InterPro" id="IPR004910">
    <property type="entry name" value="Yippee/Mis18/Cereblon"/>
</dbReference>
<dbReference type="Pfam" id="PF03226">
    <property type="entry name" value="Yippee-Mis18"/>
    <property type="match status" value="1"/>
</dbReference>
<dbReference type="PROSITE" id="PS51788">
    <property type="entry name" value="CULT"/>
    <property type="match status" value="1"/>
</dbReference>
<dbReference type="PROSITE" id="PS51787">
    <property type="entry name" value="LON_N"/>
    <property type="match status" value="1"/>
</dbReference>
<accession>B4QVV3</accession>
<keyword id="KW-0479">Metal-binding</keyword>
<keyword id="KW-0539">Nucleus</keyword>
<keyword id="KW-1185">Reference proteome</keyword>
<keyword id="KW-0832">Ubl conjugation</keyword>
<keyword id="KW-0833">Ubl conjugation pathway</keyword>
<keyword id="KW-0862">Zinc</keyword>
<evidence type="ECO:0000250" key="1">
    <source>
        <dbReference type="UniProtKB" id="Q96SW2"/>
    </source>
</evidence>
<evidence type="ECO:0000250" key="2">
    <source>
        <dbReference type="UniProtKB" id="Q9VH36"/>
    </source>
</evidence>
<evidence type="ECO:0000255" key="3">
    <source>
        <dbReference type="PROSITE-ProRule" id="PRU01123"/>
    </source>
</evidence>
<evidence type="ECO:0000255" key="4">
    <source>
        <dbReference type="PROSITE-ProRule" id="PRU01124"/>
    </source>
</evidence>
<evidence type="ECO:0000256" key="5">
    <source>
        <dbReference type="SAM" id="MobiDB-lite"/>
    </source>
</evidence>
<evidence type="ECO:0000305" key="6"/>